<accession>A0QWH1</accession>
<accession>I7FCT9</accession>
<name>Y2940_MYCS2</name>
<reference key="1">
    <citation type="submission" date="2006-10" db="EMBL/GenBank/DDBJ databases">
        <authorList>
            <person name="Fleischmann R.D."/>
            <person name="Dodson R.J."/>
            <person name="Haft D.H."/>
            <person name="Merkel J.S."/>
            <person name="Nelson W.C."/>
            <person name="Fraser C.M."/>
        </authorList>
    </citation>
    <scope>NUCLEOTIDE SEQUENCE [LARGE SCALE GENOMIC DNA]</scope>
    <source>
        <strain>ATCC 700084 / mc(2)155</strain>
    </source>
</reference>
<reference key="2">
    <citation type="journal article" date="2007" name="Genome Biol.">
        <title>Interrupted coding sequences in Mycobacterium smegmatis: authentic mutations or sequencing errors?</title>
        <authorList>
            <person name="Deshayes C."/>
            <person name="Perrodou E."/>
            <person name="Gallien S."/>
            <person name="Euphrasie D."/>
            <person name="Schaeffer C."/>
            <person name="Van-Dorsselaer A."/>
            <person name="Poch O."/>
            <person name="Lecompte O."/>
            <person name="Reyrat J.-M."/>
        </authorList>
    </citation>
    <scope>NUCLEOTIDE SEQUENCE [LARGE SCALE GENOMIC DNA]</scope>
    <source>
        <strain>ATCC 700084 / mc(2)155</strain>
    </source>
</reference>
<reference key="3">
    <citation type="journal article" date="2009" name="Genome Res.">
        <title>Ortho-proteogenomics: multiple proteomes investigation through orthology and a new MS-based protocol.</title>
        <authorList>
            <person name="Gallien S."/>
            <person name="Perrodou E."/>
            <person name="Carapito C."/>
            <person name="Deshayes C."/>
            <person name="Reyrat J.-M."/>
            <person name="Van Dorsselaer A."/>
            <person name="Poch O."/>
            <person name="Schaeffer C."/>
            <person name="Lecompte O."/>
        </authorList>
    </citation>
    <scope>NUCLEOTIDE SEQUENCE [LARGE SCALE GENOMIC DNA]</scope>
    <scope>IDENTIFICATION BY MASS SPECTROMETRY [LARGE SCALE ANALYSIS]</scope>
    <scope>CLEAVAGE OF INITIATOR METHIONINE</scope>
    <source>
        <strain>ATCC 700084 / mc(2)155</strain>
    </source>
</reference>
<organism>
    <name type="scientific">Mycolicibacterium smegmatis (strain ATCC 700084 / mc(2)155)</name>
    <name type="common">Mycobacterium smegmatis</name>
    <dbReference type="NCBI Taxonomy" id="246196"/>
    <lineage>
        <taxon>Bacteria</taxon>
        <taxon>Bacillati</taxon>
        <taxon>Actinomycetota</taxon>
        <taxon>Actinomycetes</taxon>
        <taxon>Mycobacteriales</taxon>
        <taxon>Mycobacteriaceae</taxon>
        <taxon>Mycolicibacterium</taxon>
    </lineage>
</organism>
<comment type="subcellular location">
    <subcellularLocation>
        <location evidence="1">Cytoplasm</location>
    </subcellularLocation>
</comment>
<comment type="similarity">
    <text evidence="1">Belongs to the TACO1 family.</text>
</comment>
<protein>
    <recommendedName>
        <fullName evidence="1">Probable transcriptional regulatory protein MSMEG_2940/MSMEI_2866</fullName>
    </recommendedName>
</protein>
<gene>
    <name type="ordered locus">MSMEG_2940</name>
    <name type="ordered locus">MSMEI_2866</name>
</gene>
<feature type="initiator methionine" description="Removed" evidence="2">
    <location>
        <position position="1"/>
    </location>
</feature>
<feature type="chain" id="PRO_1000045338" description="Probable transcriptional regulatory protein MSMEG_2940/MSMEI_2866">
    <location>
        <begin position="2"/>
        <end position="251"/>
    </location>
</feature>
<keyword id="KW-0963">Cytoplasm</keyword>
<keyword id="KW-0238">DNA-binding</keyword>
<keyword id="KW-1185">Reference proteome</keyword>
<keyword id="KW-0804">Transcription</keyword>
<keyword id="KW-0805">Transcription regulation</keyword>
<dbReference type="EMBL" id="CP000480">
    <property type="protein sequence ID" value="ABK69978.1"/>
    <property type="molecule type" value="Genomic_DNA"/>
</dbReference>
<dbReference type="EMBL" id="CP001663">
    <property type="protein sequence ID" value="AFP39330.1"/>
    <property type="molecule type" value="Genomic_DNA"/>
</dbReference>
<dbReference type="RefSeq" id="WP_003894318.1">
    <property type="nucleotide sequence ID" value="NZ_SIJM01000002.1"/>
</dbReference>
<dbReference type="RefSeq" id="YP_887259.1">
    <property type="nucleotide sequence ID" value="NC_008596.1"/>
</dbReference>
<dbReference type="SMR" id="A0QWH1"/>
<dbReference type="STRING" id="246196.MSMEG_2940"/>
<dbReference type="PaxDb" id="246196-MSMEI_2866"/>
<dbReference type="KEGG" id="msb:LJ00_14630"/>
<dbReference type="KEGG" id="msg:MSMEI_2866"/>
<dbReference type="KEGG" id="msm:MSMEG_2940"/>
<dbReference type="PATRIC" id="fig|246196.19.peg.2903"/>
<dbReference type="eggNOG" id="COG0217">
    <property type="taxonomic scope" value="Bacteria"/>
</dbReference>
<dbReference type="OrthoDB" id="9781053at2"/>
<dbReference type="Proteomes" id="UP000000757">
    <property type="component" value="Chromosome"/>
</dbReference>
<dbReference type="Proteomes" id="UP000006158">
    <property type="component" value="Chromosome"/>
</dbReference>
<dbReference type="GO" id="GO:0005829">
    <property type="term" value="C:cytosol"/>
    <property type="evidence" value="ECO:0007669"/>
    <property type="project" value="TreeGrafter"/>
</dbReference>
<dbReference type="GO" id="GO:0003677">
    <property type="term" value="F:DNA binding"/>
    <property type="evidence" value="ECO:0007669"/>
    <property type="project" value="UniProtKB-UniRule"/>
</dbReference>
<dbReference type="GO" id="GO:0006355">
    <property type="term" value="P:regulation of DNA-templated transcription"/>
    <property type="evidence" value="ECO:0007669"/>
    <property type="project" value="UniProtKB-UniRule"/>
</dbReference>
<dbReference type="FunFam" id="1.10.10.200:FF:000002">
    <property type="entry name" value="Probable transcriptional regulatory protein CLM62_37755"/>
    <property type="match status" value="1"/>
</dbReference>
<dbReference type="FunFam" id="3.30.70.980:FF:000006">
    <property type="entry name" value="Probable transcriptional regulatory protein J113_18170"/>
    <property type="match status" value="1"/>
</dbReference>
<dbReference type="Gene3D" id="1.10.10.200">
    <property type="match status" value="1"/>
</dbReference>
<dbReference type="Gene3D" id="3.30.70.980">
    <property type="match status" value="2"/>
</dbReference>
<dbReference type="HAMAP" id="MF_00693">
    <property type="entry name" value="Transcrip_reg_TACO1"/>
    <property type="match status" value="1"/>
</dbReference>
<dbReference type="InterPro" id="IPR017856">
    <property type="entry name" value="Integrase-like_N"/>
</dbReference>
<dbReference type="InterPro" id="IPR048300">
    <property type="entry name" value="TACO1_YebC-like_2nd/3rd_dom"/>
</dbReference>
<dbReference type="InterPro" id="IPR049083">
    <property type="entry name" value="TACO1_YebC_N"/>
</dbReference>
<dbReference type="InterPro" id="IPR002876">
    <property type="entry name" value="Transcrip_reg_TACO1-like"/>
</dbReference>
<dbReference type="InterPro" id="IPR026564">
    <property type="entry name" value="Transcrip_reg_TACO1-like_dom3"/>
</dbReference>
<dbReference type="InterPro" id="IPR029072">
    <property type="entry name" value="YebC-like"/>
</dbReference>
<dbReference type="NCBIfam" id="NF001030">
    <property type="entry name" value="PRK00110.1"/>
    <property type="match status" value="1"/>
</dbReference>
<dbReference type="NCBIfam" id="NF009044">
    <property type="entry name" value="PRK12378.1"/>
    <property type="match status" value="1"/>
</dbReference>
<dbReference type="NCBIfam" id="TIGR01033">
    <property type="entry name" value="YebC/PmpR family DNA-binding transcriptional regulator"/>
    <property type="match status" value="1"/>
</dbReference>
<dbReference type="PANTHER" id="PTHR12532:SF6">
    <property type="entry name" value="TRANSCRIPTIONAL REGULATORY PROTEIN YEBC-RELATED"/>
    <property type="match status" value="1"/>
</dbReference>
<dbReference type="PANTHER" id="PTHR12532">
    <property type="entry name" value="TRANSLATIONAL ACTIVATOR OF CYTOCHROME C OXIDASE 1"/>
    <property type="match status" value="1"/>
</dbReference>
<dbReference type="Pfam" id="PF20772">
    <property type="entry name" value="TACO1_YebC_N"/>
    <property type="match status" value="1"/>
</dbReference>
<dbReference type="Pfam" id="PF01709">
    <property type="entry name" value="Transcrip_reg"/>
    <property type="match status" value="1"/>
</dbReference>
<dbReference type="SUPFAM" id="SSF75625">
    <property type="entry name" value="YebC-like"/>
    <property type="match status" value="1"/>
</dbReference>
<proteinExistence type="evidence at protein level"/>
<evidence type="ECO:0000255" key="1">
    <source>
        <dbReference type="HAMAP-Rule" id="MF_00693"/>
    </source>
</evidence>
<evidence type="ECO:0000269" key="2">
    <source>
    </source>
</evidence>
<sequence length="251" mass="26766">MSGHSKWATTKHKKAVIDAKRGKMFAKLIKNIEVAARVGGGDPGGNPTLYDAIQKAKKSSVPNDNIERARKRGAGEEAGGADWQNITYEGYGPNGVAVLVECLTDNRNRAAGEVRVAMTRNGGNMADPGSVAYLFSRKGVVTLEKNGLTEDDVLLAVLEAGAEEVNDLGDSFEIISEPSDLVAVRTALQEAGIDYDSADASFQPSVTVPVDLEGARKVLKLVDALEDSDDVQDVYTNMDIPDDVAAQLDEE</sequence>